<accession>B8CM22</accession>
<dbReference type="EC" id="2.7.7.56" evidence="1"/>
<dbReference type="EMBL" id="CP000472">
    <property type="protein sequence ID" value="ACJ28946.1"/>
    <property type="molecule type" value="Genomic_DNA"/>
</dbReference>
<dbReference type="RefSeq" id="WP_020912308.1">
    <property type="nucleotide sequence ID" value="NC_011566.1"/>
</dbReference>
<dbReference type="SMR" id="B8CM22"/>
<dbReference type="STRING" id="225849.swp_2196"/>
<dbReference type="KEGG" id="swp:swp_2196"/>
<dbReference type="eggNOG" id="COG0689">
    <property type="taxonomic scope" value="Bacteria"/>
</dbReference>
<dbReference type="HOGENOM" id="CLU_050858_0_0_6"/>
<dbReference type="OrthoDB" id="9802265at2"/>
<dbReference type="Proteomes" id="UP000000753">
    <property type="component" value="Chromosome"/>
</dbReference>
<dbReference type="GO" id="GO:0000175">
    <property type="term" value="F:3'-5'-RNA exonuclease activity"/>
    <property type="evidence" value="ECO:0007669"/>
    <property type="project" value="UniProtKB-UniRule"/>
</dbReference>
<dbReference type="GO" id="GO:0000049">
    <property type="term" value="F:tRNA binding"/>
    <property type="evidence" value="ECO:0007669"/>
    <property type="project" value="UniProtKB-UniRule"/>
</dbReference>
<dbReference type="GO" id="GO:0009022">
    <property type="term" value="F:tRNA nucleotidyltransferase activity"/>
    <property type="evidence" value="ECO:0007669"/>
    <property type="project" value="UniProtKB-UniRule"/>
</dbReference>
<dbReference type="GO" id="GO:0016075">
    <property type="term" value="P:rRNA catabolic process"/>
    <property type="evidence" value="ECO:0007669"/>
    <property type="project" value="UniProtKB-UniRule"/>
</dbReference>
<dbReference type="GO" id="GO:0006364">
    <property type="term" value="P:rRNA processing"/>
    <property type="evidence" value="ECO:0007669"/>
    <property type="project" value="UniProtKB-KW"/>
</dbReference>
<dbReference type="GO" id="GO:0008033">
    <property type="term" value="P:tRNA processing"/>
    <property type="evidence" value="ECO:0007669"/>
    <property type="project" value="UniProtKB-UniRule"/>
</dbReference>
<dbReference type="CDD" id="cd11362">
    <property type="entry name" value="RNase_PH_bact"/>
    <property type="match status" value="1"/>
</dbReference>
<dbReference type="FunFam" id="3.30.230.70:FF:000003">
    <property type="entry name" value="Ribonuclease PH"/>
    <property type="match status" value="1"/>
</dbReference>
<dbReference type="Gene3D" id="3.30.230.70">
    <property type="entry name" value="GHMP Kinase, N-terminal domain"/>
    <property type="match status" value="1"/>
</dbReference>
<dbReference type="HAMAP" id="MF_00564">
    <property type="entry name" value="RNase_PH"/>
    <property type="match status" value="1"/>
</dbReference>
<dbReference type="InterPro" id="IPR001247">
    <property type="entry name" value="ExoRNase_PH_dom1"/>
</dbReference>
<dbReference type="InterPro" id="IPR015847">
    <property type="entry name" value="ExoRNase_PH_dom2"/>
</dbReference>
<dbReference type="InterPro" id="IPR036345">
    <property type="entry name" value="ExoRNase_PH_dom2_sf"/>
</dbReference>
<dbReference type="InterPro" id="IPR027408">
    <property type="entry name" value="PNPase/RNase_PH_dom_sf"/>
</dbReference>
<dbReference type="InterPro" id="IPR020568">
    <property type="entry name" value="Ribosomal_Su5_D2-typ_SF"/>
</dbReference>
<dbReference type="InterPro" id="IPR050080">
    <property type="entry name" value="RNase_PH"/>
</dbReference>
<dbReference type="InterPro" id="IPR002381">
    <property type="entry name" value="RNase_PH_bac-type"/>
</dbReference>
<dbReference type="InterPro" id="IPR018336">
    <property type="entry name" value="RNase_PH_CS"/>
</dbReference>
<dbReference type="NCBIfam" id="TIGR01966">
    <property type="entry name" value="RNasePH"/>
    <property type="match status" value="1"/>
</dbReference>
<dbReference type="PANTHER" id="PTHR11953">
    <property type="entry name" value="EXOSOME COMPLEX COMPONENT"/>
    <property type="match status" value="1"/>
</dbReference>
<dbReference type="PANTHER" id="PTHR11953:SF0">
    <property type="entry name" value="EXOSOME COMPLEX COMPONENT RRP41"/>
    <property type="match status" value="1"/>
</dbReference>
<dbReference type="Pfam" id="PF01138">
    <property type="entry name" value="RNase_PH"/>
    <property type="match status" value="1"/>
</dbReference>
<dbReference type="Pfam" id="PF03725">
    <property type="entry name" value="RNase_PH_C"/>
    <property type="match status" value="1"/>
</dbReference>
<dbReference type="SUPFAM" id="SSF55666">
    <property type="entry name" value="Ribonuclease PH domain 2-like"/>
    <property type="match status" value="1"/>
</dbReference>
<dbReference type="SUPFAM" id="SSF54211">
    <property type="entry name" value="Ribosomal protein S5 domain 2-like"/>
    <property type="match status" value="1"/>
</dbReference>
<dbReference type="PROSITE" id="PS01277">
    <property type="entry name" value="RIBONUCLEASE_PH"/>
    <property type="match status" value="1"/>
</dbReference>
<organism>
    <name type="scientific">Shewanella piezotolerans (strain WP3 / JCM 13877)</name>
    <dbReference type="NCBI Taxonomy" id="225849"/>
    <lineage>
        <taxon>Bacteria</taxon>
        <taxon>Pseudomonadati</taxon>
        <taxon>Pseudomonadota</taxon>
        <taxon>Gammaproteobacteria</taxon>
        <taxon>Alteromonadales</taxon>
        <taxon>Shewanellaceae</taxon>
        <taxon>Shewanella</taxon>
    </lineage>
</organism>
<feature type="chain" id="PRO_1000129373" description="Ribonuclease PH">
    <location>
        <begin position="1"/>
        <end position="237"/>
    </location>
</feature>
<feature type="binding site" evidence="1">
    <location>
        <position position="86"/>
    </location>
    <ligand>
        <name>phosphate</name>
        <dbReference type="ChEBI" id="CHEBI:43474"/>
        <note>substrate</note>
    </ligand>
</feature>
<feature type="binding site" evidence="1">
    <location>
        <begin position="124"/>
        <end position="126"/>
    </location>
    <ligand>
        <name>phosphate</name>
        <dbReference type="ChEBI" id="CHEBI:43474"/>
        <note>substrate</note>
    </ligand>
</feature>
<gene>
    <name evidence="1" type="primary">rph</name>
    <name type="ordered locus">swp_2196</name>
</gene>
<sequence>MRPSNRTPAQSRPVTITRQFTAHAEGSVLVEFGDTKVLCTASFEEGVPRFLKGQGQGWVTAEYGMLPRSTHSRMNREAARGKQSGRTQEIQRLIGRSLRAAVDMKLLGENTIVIDCDVIQADGGTRTAAITGACVALVDALNWARGKGILKTNPLKFLIAAVSVGIYKGEPICDLEYIEDSAAETDMNVVMTETGKMIEIQGTAEGEPFTHEELLSLLDLAKHGIREIVDIQKASLS</sequence>
<evidence type="ECO:0000255" key="1">
    <source>
        <dbReference type="HAMAP-Rule" id="MF_00564"/>
    </source>
</evidence>
<proteinExistence type="inferred from homology"/>
<comment type="function">
    <text evidence="1">Phosphorolytic 3'-5' exoribonuclease that plays an important role in tRNA 3'-end maturation. Removes nucleotide residues following the 3'-CCA terminus of tRNAs; can also add nucleotides to the ends of RNA molecules by using nucleoside diphosphates as substrates, but this may not be physiologically important. Probably plays a role in initiation of 16S rRNA degradation (leading to ribosome degradation) during starvation.</text>
</comment>
<comment type="catalytic activity">
    <reaction evidence="1">
        <text>tRNA(n+1) + phosphate = tRNA(n) + a ribonucleoside 5'-diphosphate</text>
        <dbReference type="Rhea" id="RHEA:10628"/>
        <dbReference type="Rhea" id="RHEA-COMP:17343"/>
        <dbReference type="Rhea" id="RHEA-COMP:17344"/>
        <dbReference type="ChEBI" id="CHEBI:43474"/>
        <dbReference type="ChEBI" id="CHEBI:57930"/>
        <dbReference type="ChEBI" id="CHEBI:173114"/>
        <dbReference type="EC" id="2.7.7.56"/>
    </reaction>
</comment>
<comment type="subunit">
    <text evidence="1">Homohexameric ring arranged as a trimer of dimers.</text>
</comment>
<comment type="similarity">
    <text evidence="1">Belongs to the RNase PH family.</text>
</comment>
<reference key="1">
    <citation type="journal article" date="2008" name="PLoS ONE">
        <title>Environmental adaptation: genomic analysis of the piezotolerant and psychrotolerant deep-sea iron reducing bacterium Shewanella piezotolerans WP3.</title>
        <authorList>
            <person name="Wang F."/>
            <person name="Wang J."/>
            <person name="Jian H."/>
            <person name="Zhang B."/>
            <person name="Li S."/>
            <person name="Wang F."/>
            <person name="Zeng X."/>
            <person name="Gao L."/>
            <person name="Bartlett D.H."/>
            <person name="Yu J."/>
            <person name="Hu S."/>
            <person name="Xiao X."/>
        </authorList>
    </citation>
    <scope>NUCLEOTIDE SEQUENCE [LARGE SCALE GENOMIC DNA]</scope>
    <source>
        <strain>WP3 / JCM 13877</strain>
    </source>
</reference>
<name>RNPH_SHEPW</name>
<protein>
    <recommendedName>
        <fullName evidence="1">Ribonuclease PH</fullName>
        <shortName evidence="1">RNase PH</shortName>
        <ecNumber evidence="1">2.7.7.56</ecNumber>
    </recommendedName>
    <alternativeName>
        <fullName evidence="1">tRNA nucleotidyltransferase</fullName>
    </alternativeName>
</protein>
<keyword id="KW-0548">Nucleotidyltransferase</keyword>
<keyword id="KW-0694">RNA-binding</keyword>
<keyword id="KW-0698">rRNA processing</keyword>
<keyword id="KW-0808">Transferase</keyword>
<keyword id="KW-0819">tRNA processing</keyword>
<keyword id="KW-0820">tRNA-binding</keyword>